<reference key="1">
    <citation type="journal article" date="2008" name="BMC Genomics">
        <title>The genome of Aeromonas salmonicida subsp. salmonicida A449: insights into the evolution of a fish pathogen.</title>
        <authorList>
            <person name="Reith M.E."/>
            <person name="Singh R.K."/>
            <person name="Curtis B."/>
            <person name="Boyd J.M."/>
            <person name="Bouevitch A."/>
            <person name="Kimball J."/>
            <person name="Munholland J."/>
            <person name="Murphy C."/>
            <person name="Sarty D."/>
            <person name="Williams J."/>
            <person name="Nash J.H."/>
            <person name="Johnson S.C."/>
            <person name="Brown L.L."/>
        </authorList>
    </citation>
    <scope>NUCLEOTIDE SEQUENCE [LARGE SCALE GENOMIC DNA]</scope>
    <source>
        <strain>A449</strain>
    </source>
</reference>
<comment type="function">
    <text evidence="1">Single strand-specific metallo-endoribonuclease involved in late-stage 70S ribosome quality control and in maturation of the 3' terminus of the 16S rRNA.</text>
</comment>
<comment type="cofactor">
    <cofactor evidence="1">
        <name>Zn(2+)</name>
        <dbReference type="ChEBI" id="CHEBI:29105"/>
    </cofactor>
    <text evidence="1">Binds 1 zinc ion.</text>
</comment>
<comment type="subcellular location">
    <subcellularLocation>
        <location evidence="1">Cytoplasm</location>
    </subcellularLocation>
</comment>
<comment type="similarity">
    <text evidence="1">Belongs to the endoribonuclease YbeY family.</text>
</comment>
<feature type="chain" id="PRO_1000000709" description="Endoribonuclease YbeY">
    <location>
        <begin position="1"/>
        <end position="154"/>
    </location>
</feature>
<feature type="binding site" evidence="1">
    <location>
        <position position="113"/>
    </location>
    <ligand>
        <name>Zn(2+)</name>
        <dbReference type="ChEBI" id="CHEBI:29105"/>
        <note>catalytic</note>
    </ligand>
</feature>
<feature type="binding site" evidence="1">
    <location>
        <position position="117"/>
    </location>
    <ligand>
        <name>Zn(2+)</name>
        <dbReference type="ChEBI" id="CHEBI:29105"/>
        <note>catalytic</note>
    </ligand>
</feature>
<feature type="binding site" evidence="1">
    <location>
        <position position="123"/>
    </location>
    <ligand>
        <name>Zn(2+)</name>
        <dbReference type="ChEBI" id="CHEBI:29105"/>
        <note>catalytic</note>
    </ligand>
</feature>
<keyword id="KW-0963">Cytoplasm</keyword>
<keyword id="KW-0255">Endonuclease</keyword>
<keyword id="KW-0378">Hydrolase</keyword>
<keyword id="KW-0479">Metal-binding</keyword>
<keyword id="KW-0540">Nuclease</keyword>
<keyword id="KW-0690">Ribosome biogenesis</keyword>
<keyword id="KW-0698">rRNA processing</keyword>
<keyword id="KW-0862">Zinc</keyword>
<accession>A4SJX2</accession>
<gene>
    <name evidence="1" type="primary">ybeY</name>
    <name type="ordered locus">ASA_1072</name>
</gene>
<evidence type="ECO:0000255" key="1">
    <source>
        <dbReference type="HAMAP-Rule" id="MF_00009"/>
    </source>
</evidence>
<sequence length="154" mass="17304">MSVTLDLQLACADTDGLPGEAQLQGWLDGTILGFQEEAEVTVRIVDEAESRELNLTYRGKDKPTNVLSFPFEAPPGMELPLLGDLVICRQVVEQEATEQNKPLEAHWAHMVVHGSLHLLGYDHIEDDEAEEMEQLERDIMQELGFADPYLNDEE</sequence>
<dbReference type="EC" id="3.1.-.-" evidence="1"/>
<dbReference type="EMBL" id="CP000644">
    <property type="protein sequence ID" value="ABO89194.1"/>
    <property type="molecule type" value="Genomic_DNA"/>
</dbReference>
<dbReference type="RefSeq" id="WP_005317318.1">
    <property type="nucleotide sequence ID" value="NC_009348.1"/>
</dbReference>
<dbReference type="SMR" id="A4SJX2"/>
<dbReference type="STRING" id="29491.GCA_000820065_02565"/>
<dbReference type="KEGG" id="asa:ASA_1072"/>
<dbReference type="eggNOG" id="COG0319">
    <property type="taxonomic scope" value="Bacteria"/>
</dbReference>
<dbReference type="HOGENOM" id="CLU_106710_0_1_6"/>
<dbReference type="Proteomes" id="UP000000225">
    <property type="component" value="Chromosome"/>
</dbReference>
<dbReference type="GO" id="GO:0005737">
    <property type="term" value="C:cytoplasm"/>
    <property type="evidence" value="ECO:0007669"/>
    <property type="project" value="UniProtKB-SubCell"/>
</dbReference>
<dbReference type="GO" id="GO:0004222">
    <property type="term" value="F:metalloendopeptidase activity"/>
    <property type="evidence" value="ECO:0007669"/>
    <property type="project" value="InterPro"/>
</dbReference>
<dbReference type="GO" id="GO:0004521">
    <property type="term" value="F:RNA endonuclease activity"/>
    <property type="evidence" value="ECO:0007669"/>
    <property type="project" value="UniProtKB-UniRule"/>
</dbReference>
<dbReference type="GO" id="GO:0008270">
    <property type="term" value="F:zinc ion binding"/>
    <property type="evidence" value="ECO:0007669"/>
    <property type="project" value="UniProtKB-UniRule"/>
</dbReference>
<dbReference type="GO" id="GO:0006364">
    <property type="term" value="P:rRNA processing"/>
    <property type="evidence" value="ECO:0007669"/>
    <property type="project" value="UniProtKB-UniRule"/>
</dbReference>
<dbReference type="Gene3D" id="3.40.390.30">
    <property type="entry name" value="Metalloproteases ('zincins'), catalytic domain"/>
    <property type="match status" value="1"/>
</dbReference>
<dbReference type="HAMAP" id="MF_00009">
    <property type="entry name" value="Endoribonucl_YbeY"/>
    <property type="match status" value="1"/>
</dbReference>
<dbReference type="InterPro" id="IPR023091">
    <property type="entry name" value="MetalPrtase_cat_dom_sf_prd"/>
</dbReference>
<dbReference type="InterPro" id="IPR002036">
    <property type="entry name" value="YbeY"/>
</dbReference>
<dbReference type="InterPro" id="IPR020549">
    <property type="entry name" value="YbeY_CS"/>
</dbReference>
<dbReference type="NCBIfam" id="TIGR00043">
    <property type="entry name" value="rRNA maturation RNase YbeY"/>
    <property type="match status" value="1"/>
</dbReference>
<dbReference type="PANTHER" id="PTHR46986">
    <property type="entry name" value="ENDORIBONUCLEASE YBEY, CHLOROPLASTIC"/>
    <property type="match status" value="1"/>
</dbReference>
<dbReference type="PANTHER" id="PTHR46986:SF1">
    <property type="entry name" value="ENDORIBONUCLEASE YBEY, CHLOROPLASTIC"/>
    <property type="match status" value="1"/>
</dbReference>
<dbReference type="Pfam" id="PF02130">
    <property type="entry name" value="YbeY"/>
    <property type="match status" value="1"/>
</dbReference>
<dbReference type="SUPFAM" id="SSF55486">
    <property type="entry name" value="Metalloproteases ('zincins'), catalytic domain"/>
    <property type="match status" value="1"/>
</dbReference>
<dbReference type="PROSITE" id="PS01306">
    <property type="entry name" value="UPF0054"/>
    <property type="match status" value="1"/>
</dbReference>
<organism>
    <name type="scientific">Aeromonas salmonicida (strain A449)</name>
    <dbReference type="NCBI Taxonomy" id="382245"/>
    <lineage>
        <taxon>Bacteria</taxon>
        <taxon>Pseudomonadati</taxon>
        <taxon>Pseudomonadota</taxon>
        <taxon>Gammaproteobacteria</taxon>
        <taxon>Aeromonadales</taxon>
        <taxon>Aeromonadaceae</taxon>
        <taxon>Aeromonas</taxon>
    </lineage>
</organism>
<name>YBEY_AERS4</name>
<protein>
    <recommendedName>
        <fullName evidence="1">Endoribonuclease YbeY</fullName>
        <ecNumber evidence="1">3.1.-.-</ecNumber>
    </recommendedName>
</protein>
<proteinExistence type="inferred from homology"/>